<organism>
    <name type="scientific">Homo sapiens</name>
    <name type="common">Human</name>
    <dbReference type="NCBI Taxonomy" id="9606"/>
    <lineage>
        <taxon>Eukaryota</taxon>
        <taxon>Metazoa</taxon>
        <taxon>Chordata</taxon>
        <taxon>Craniata</taxon>
        <taxon>Vertebrata</taxon>
        <taxon>Euteleostomi</taxon>
        <taxon>Mammalia</taxon>
        <taxon>Eutheria</taxon>
        <taxon>Euarchontoglires</taxon>
        <taxon>Primates</taxon>
        <taxon>Haplorrhini</taxon>
        <taxon>Catarrhini</taxon>
        <taxon>Hominidae</taxon>
        <taxon>Homo</taxon>
    </lineage>
</organism>
<comment type="function">
    <text>May be involved in transcriptional regulation.</text>
</comment>
<comment type="subcellular location">
    <subcellularLocation>
        <location evidence="4">Nucleus</location>
    </subcellularLocation>
</comment>
<comment type="similarity">
    <text evidence="4">Belongs to the krueppel C2H2-type zinc-finger protein family.</text>
</comment>
<dbReference type="EMBL" id="AC006557">
    <property type="status" value="NOT_ANNOTATED_CDS"/>
    <property type="molecule type" value="Genomic_DNA"/>
</dbReference>
<dbReference type="EMBL" id="BC024227">
    <property type="protein sequence ID" value="AAH24227.1"/>
    <property type="molecule type" value="mRNA"/>
</dbReference>
<dbReference type="CCDS" id="CCDS32797.1"/>
<dbReference type="RefSeq" id="NP_660330.2">
    <property type="nucleotide sequence ID" value="NM_145287.4"/>
</dbReference>
<dbReference type="RefSeq" id="XP_016881051.1">
    <property type="nucleotide sequence ID" value="XM_017025562.1"/>
</dbReference>
<dbReference type="RefSeq" id="XP_016881052.1">
    <property type="nucleotide sequence ID" value="XM_017025563.1"/>
</dbReference>
<dbReference type="RefSeq" id="XP_016881053.1">
    <property type="nucleotide sequence ID" value="XM_017025564.1"/>
</dbReference>
<dbReference type="RefSeq" id="XP_016881054.1">
    <property type="nucleotide sequence ID" value="XM_017025565.1"/>
</dbReference>
<dbReference type="SMR" id="Q8TB69"/>
<dbReference type="BioGRID" id="127827">
    <property type="interactions" value="1"/>
</dbReference>
<dbReference type="IntAct" id="Q8TB69">
    <property type="interactions" value="1"/>
</dbReference>
<dbReference type="STRING" id="9606.ENSP00000464872"/>
<dbReference type="iPTMnet" id="Q8TB69"/>
<dbReference type="PhosphoSitePlus" id="Q8TB69"/>
<dbReference type="BioMuta" id="ZNF519"/>
<dbReference type="DMDM" id="296453045"/>
<dbReference type="jPOST" id="Q8TB69"/>
<dbReference type="MassIVE" id="Q8TB69"/>
<dbReference type="PaxDb" id="9606-ENSP00000464872"/>
<dbReference type="PeptideAtlas" id="Q8TB69"/>
<dbReference type="ProteomicsDB" id="73968"/>
<dbReference type="Antibodypedia" id="21965">
    <property type="antibodies" value="24 antibodies from 12 providers"/>
</dbReference>
<dbReference type="DNASU" id="162655"/>
<dbReference type="Ensembl" id="ENST00000590202.3">
    <property type="protein sequence ID" value="ENSP00000464872.2"/>
    <property type="gene ID" value="ENSG00000175322.12"/>
</dbReference>
<dbReference type="GeneID" id="162655"/>
<dbReference type="KEGG" id="hsa:162655"/>
<dbReference type="MANE-Select" id="ENST00000590202.3">
    <property type="protein sequence ID" value="ENSP00000464872.2"/>
    <property type="RefSeq nucleotide sequence ID" value="NM_145287.4"/>
    <property type="RefSeq protein sequence ID" value="NP_660330.2"/>
</dbReference>
<dbReference type="UCSC" id="uc002kst.3">
    <property type="organism name" value="human"/>
</dbReference>
<dbReference type="AGR" id="HGNC:30574"/>
<dbReference type="CTD" id="162655"/>
<dbReference type="DisGeNET" id="162655"/>
<dbReference type="GeneCards" id="ZNF519"/>
<dbReference type="HGNC" id="HGNC:30574">
    <property type="gene designation" value="ZNF519"/>
</dbReference>
<dbReference type="HPA" id="ENSG00000175322">
    <property type="expression patterns" value="Tissue enhanced (brain)"/>
</dbReference>
<dbReference type="MalaCards" id="ZNF519"/>
<dbReference type="neXtProt" id="NX_Q8TB69"/>
<dbReference type="OpenTargets" id="ENSG00000175322"/>
<dbReference type="PharmGKB" id="PA134863605"/>
<dbReference type="VEuPathDB" id="HostDB:ENSG00000175322"/>
<dbReference type="eggNOG" id="KOG1721">
    <property type="taxonomic scope" value="Eukaryota"/>
</dbReference>
<dbReference type="GeneTree" id="ENSGT00940000153165"/>
<dbReference type="HOGENOM" id="CLU_002678_44_17_1"/>
<dbReference type="InParanoid" id="Q8TB69"/>
<dbReference type="OMA" id="FNRGSYL"/>
<dbReference type="OrthoDB" id="6591996at2759"/>
<dbReference type="PAN-GO" id="Q8TB69">
    <property type="GO annotations" value="3 GO annotations based on evolutionary models"/>
</dbReference>
<dbReference type="PhylomeDB" id="Q8TB69"/>
<dbReference type="PathwayCommons" id="Q8TB69"/>
<dbReference type="Reactome" id="R-HSA-212436">
    <property type="pathway name" value="Generic Transcription Pathway"/>
</dbReference>
<dbReference type="Reactome" id="R-HSA-9843940">
    <property type="pathway name" value="Regulation of endogenous retroelements by KRAB-ZFP proteins"/>
</dbReference>
<dbReference type="SignaLink" id="Q8TB69"/>
<dbReference type="BioGRID-ORCS" id="162655">
    <property type="hits" value="38 hits in 1111 CRISPR screens"/>
</dbReference>
<dbReference type="GenomeRNAi" id="162655"/>
<dbReference type="Pharos" id="Q8TB69">
    <property type="development level" value="Tdark"/>
</dbReference>
<dbReference type="PRO" id="PR:Q8TB69"/>
<dbReference type="Proteomes" id="UP000005640">
    <property type="component" value="Chromosome 18"/>
</dbReference>
<dbReference type="RNAct" id="Q8TB69">
    <property type="molecule type" value="protein"/>
</dbReference>
<dbReference type="Bgee" id="ENSG00000175322">
    <property type="expression patterns" value="Expressed in buccal mucosa cell and 118 other cell types or tissues"/>
</dbReference>
<dbReference type="ExpressionAtlas" id="Q8TB69">
    <property type="expression patterns" value="baseline and differential"/>
</dbReference>
<dbReference type="GO" id="GO:0005634">
    <property type="term" value="C:nucleus"/>
    <property type="evidence" value="ECO:0007669"/>
    <property type="project" value="UniProtKB-SubCell"/>
</dbReference>
<dbReference type="GO" id="GO:0000981">
    <property type="term" value="F:DNA-binding transcription factor activity, RNA polymerase II-specific"/>
    <property type="evidence" value="ECO:0000318"/>
    <property type="project" value="GO_Central"/>
</dbReference>
<dbReference type="GO" id="GO:0000978">
    <property type="term" value="F:RNA polymerase II cis-regulatory region sequence-specific DNA binding"/>
    <property type="evidence" value="ECO:0000318"/>
    <property type="project" value="GO_Central"/>
</dbReference>
<dbReference type="GO" id="GO:0008270">
    <property type="term" value="F:zinc ion binding"/>
    <property type="evidence" value="ECO:0007669"/>
    <property type="project" value="UniProtKB-KW"/>
</dbReference>
<dbReference type="GO" id="GO:0006355">
    <property type="term" value="P:regulation of DNA-templated transcription"/>
    <property type="evidence" value="ECO:0000318"/>
    <property type="project" value="GO_Central"/>
</dbReference>
<dbReference type="CDD" id="cd07765">
    <property type="entry name" value="KRAB_A-box"/>
    <property type="match status" value="1"/>
</dbReference>
<dbReference type="FunFam" id="3.30.160.60:FF:000020">
    <property type="entry name" value="Zinc finger protein 14 homolog"/>
    <property type="match status" value="1"/>
</dbReference>
<dbReference type="FunFam" id="3.30.160.60:FF:000034">
    <property type="entry name" value="zinc finger protein 25"/>
    <property type="match status" value="1"/>
</dbReference>
<dbReference type="FunFam" id="3.30.160.60:FF:000016">
    <property type="entry name" value="zinc finger protein 37 homolog"/>
    <property type="match status" value="2"/>
</dbReference>
<dbReference type="FunFam" id="3.30.160.60:FF:001941">
    <property type="entry name" value="Zinc finger protein 460"/>
    <property type="match status" value="1"/>
</dbReference>
<dbReference type="FunFam" id="3.30.160.60:FF:000737">
    <property type="entry name" value="Zinc finger protein 565"/>
    <property type="match status" value="3"/>
</dbReference>
<dbReference type="FunFam" id="3.30.160.60:FF:000307">
    <property type="entry name" value="Zinc finger protein ZFP69 isoform 1"/>
    <property type="match status" value="1"/>
</dbReference>
<dbReference type="Gene3D" id="6.10.140.140">
    <property type="match status" value="1"/>
</dbReference>
<dbReference type="Gene3D" id="3.30.160.60">
    <property type="entry name" value="Classic Zinc Finger"/>
    <property type="match status" value="12"/>
</dbReference>
<dbReference type="InterPro" id="IPR050589">
    <property type="entry name" value="Ikaros_C2H2-ZF"/>
</dbReference>
<dbReference type="InterPro" id="IPR001909">
    <property type="entry name" value="KRAB"/>
</dbReference>
<dbReference type="InterPro" id="IPR036051">
    <property type="entry name" value="KRAB_dom_sf"/>
</dbReference>
<dbReference type="InterPro" id="IPR036236">
    <property type="entry name" value="Znf_C2H2_sf"/>
</dbReference>
<dbReference type="InterPro" id="IPR013087">
    <property type="entry name" value="Znf_C2H2_type"/>
</dbReference>
<dbReference type="PANTHER" id="PTHR24404">
    <property type="entry name" value="ZINC FINGER PROTEIN"/>
    <property type="match status" value="1"/>
</dbReference>
<dbReference type="PANTHER" id="PTHR24404:SF100">
    <property type="entry name" value="ZINC FINGER PROTEIN 501"/>
    <property type="match status" value="1"/>
</dbReference>
<dbReference type="Pfam" id="PF01352">
    <property type="entry name" value="KRAB"/>
    <property type="match status" value="1"/>
</dbReference>
<dbReference type="Pfam" id="PF00096">
    <property type="entry name" value="zf-C2H2"/>
    <property type="match status" value="9"/>
</dbReference>
<dbReference type="SMART" id="SM00349">
    <property type="entry name" value="KRAB"/>
    <property type="match status" value="1"/>
</dbReference>
<dbReference type="SMART" id="SM00355">
    <property type="entry name" value="ZnF_C2H2"/>
    <property type="match status" value="10"/>
</dbReference>
<dbReference type="SUPFAM" id="SSF57667">
    <property type="entry name" value="beta-beta-alpha zinc fingers"/>
    <property type="match status" value="7"/>
</dbReference>
<dbReference type="SUPFAM" id="SSF109640">
    <property type="entry name" value="KRAB domain (Kruppel-associated box)"/>
    <property type="match status" value="1"/>
</dbReference>
<dbReference type="PROSITE" id="PS50805">
    <property type="entry name" value="KRAB"/>
    <property type="match status" value="1"/>
</dbReference>
<dbReference type="PROSITE" id="PS00028">
    <property type="entry name" value="ZINC_FINGER_C2H2_1"/>
    <property type="match status" value="9"/>
</dbReference>
<dbReference type="PROSITE" id="PS50157">
    <property type="entry name" value="ZINC_FINGER_C2H2_2"/>
    <property type="match status" value="10"/>
</dbReference>
<reference key="1">
    <citation type="journal article" date="2005" name="Nature">
        <title>DNA sequence and analysis of human chromosome 18.</title>
        <authorList>
            <person name="Nusbaum C."/>
            <person name="Zody M.C."/>
            <person name="Borowsky M.L."/>
            <person name="Kamal M."/>
            <person name="Kodira C.D."/>
            <person name="Taylor T.D."/>
            <person name="Whittaker C.A."/>
            <person name="Chang J.L."/>
            <person name="Cuomo C.A."/>
            <person name="Dewar K."/>
            <person name="FitzGerald M.G."/>
            <person name="Yang X."/>
            <person name="Abouelleil A."/>
            <person name="Allen N.R."/>
            <person name="Anderson S."/>
            <person name="Bloom T."/>
            <person name="Bugalter B."/>
            <person name="Butler J."/>
            <person name="Cook A."/>
            <person name="DeCaprio D."/>
            <person name="Engels R."/>
            <person name="Garber M."/>
            <person name="Gnirke A."/>
            <person name="Hafez N."/>
            <person name="Hall J.L."/>
            <person name="Norman C.H."/>
            <person name="Itoh T."/>
            <person name="Jaffe D.B."/>
            <person name="Kuroki Y."/>
            <person name="Lehoczky J."/>
            <person name="Lui A."/>
            <person name="Macdonald P."/>
            <person name="Mauceli E."/>
            <person name="Mikkelsen T.S."/>
            <person name="Naylor J.W."/>
            <person name="Nicol R."/>
            <person name="Nguyen C."/>
            <person name="Noguchi H."/>
            <person name="O'Leary S.B."/>
            <person name="Piqani B."/>
            <person name="Smith C.L."/>
            <person name="Talamas J.A."/>
            <person name="Topham K."/>
            <person name="Totoki Y."/>
            <person name="Toyoda A."/>
            <person name="Wain H.M."/>
            <person name="Young S.K."/>
            <person name="Zeng Q."/>
            <person name="Zimmer A.R."/>
            <person name="Fujiyama A."/>
            <person name="Hattori M."/>
            <person name="Birren B.W."/>
            <person name="Sakaki Y."/>
            <person name="Lander E.S."/>
        </authorList>
    </citation>
    <scope>NUCLEOTIDE SEQUENCE [LARGE SCALE GENOMIC DNA]</scope>
</reference>
<reference key="2">
    <citation type="journal article" date="2004" name="Genome Res.">
        <title>The status, quality, and expansion of the NIH full-length cDNA project: the Mammalian Gene Collection (MGC).</title>
        <authorList>
            <consortium name="The MGC Project Team"/>
        </authorList>
    </citation>
    <scope>NUCLEOTIDE SEQUENCE [LARGE SCALE MRNA]</scope>
    <scope>VARIANT GLU-206</scope>
    <source>
        <tissue>Prostatic adenocarcinoma</tissue>
    </source>
</reference>
<sequence>MELLTFRDVAIEFSPEEWKCLDPAQQNLYRDVMLENYRNLVSLAVYSYYNQGILPEQGIQDSFKKATLGRYGSCGLENICLWKNWESIGEGEGQKECYNLCSQYLTTSHNKHLTVKGDKEYRIFQKKPQFLSAAPTEPCIPMNKYQHKFLKSVFCNKNQINFNHDSNISKHHSTHFLENYYNCNECEKVFYQSSKLIFPENIHIQKKPYNSNECGETSDPFSKLTQHQRIYIGESSQRCNKKCIIVFSQSHLKGHKIINTGEKSVKYKERGKAFTRGLHLGHQKIHTGEKPYKCKKCDKAFNKSSHLAQHQRIHTGEKPFKCKECGKAFNRGSYLTQHQRIHTGERAFKCEECGKAFNRGSYLTQHQRIHTGEKPFRCKECGKAFNRSSYVTQHQRMHTGEKPFKCKECGKAFNRASHLTQHQRIHTGEKHFKCKECGKAFNRGSHLTRHQRIHTGEKSFKCEECGKAFIWGSHLTQHQRVHTGEKFFKCKECGKAFTRSSHLTQHQRIHTGEKPFKCKECGKAFNRRSTLTQHQIIHTR</sequence>
<feature type="chain" id="PRO_0000047637" description="Zinc finger protein 519">
    <location>
        <begin position="1"/>
        <end position="540"/>
    </location>
</feature>
<feature type="domain" description="KRAB" evidence="2">
    <location>
        <begin position="4"/>
        <end position="78"/>
    </location>
</feature>
<feature type="zinc finger region" description="C2H2-type 1; degenerate" evidence="1">
    <location>
        <begin position="181"/>
        <end position="203"/>
    </location>
</feature>
<feature type="zinc finger region" description="C2H2-type 2" evidence="1">
    <location>
        <begin position="292"/>
        <end position="314"/>
    </location>
</feature>
<feature type="zinc finger region" description="C2H2-type 3" evidence="1">
    <location>
        <begin position="320"/>
        <end position="342"/>
    </location>
</feature>
<feature type="zinc finger region" description="C2H2-type 4" evidence="1">
    <location>
        <begin position="348"/>
        <end position="370"/>
    </location>
</feature>
<feature type="zinc finger region" description="C2H2-type 5" evidence="1">
    <location>
        <begin position="376"/>
        <end position="398"/>
    </location>
</feature>
<feature type="zinc finger region" description="C2H2-type 6" evidence="1">
    <location>
        <begin position="404"/>
        <end position="426"/>
    </location>
</feature>
<feature type="zinc finger region" description="C2H2-type 7" evidence="1">
    <location>
        <begin position="432"/>
        <end position="454"/>
    </location>
</feature>
<feature type="zinc finger region" description="C2H2-type 8" evidence="1">
    <location>
        <begin position="460"/>
        <end position="482"/>
    </location>
</feature>
<feature type="zinc finger region" description="C2H2-type 9" evidence="1">
    <location>
        <begin position="488"/>
        <end position="510"/>
    </location>
</feature>
<feature type="zinc finger region" description="C2H2-type 10" evidence="1">
    <location>
        <begin position="516"/>
        <end position="538"/>
    </location>
</feature>
<feature type="sequence variant" id="VAR_052854" description="In dbSNP:rs16941623.">
    <original>W</original>
    <variation>R</variation>
    <location>
        <position position="18"/>
    </location>
</feature>
<feature type="sequence variant" id="VAR_052855" description="In dbSNP:rs10221432.">
    <original>G</original>
    <variation>S</variation>
    <location>
        <position position="89"/>
    </location>
</feature>
<feature type="sequence variant" id="VAR_052856" description="In dbSNP:rs2159940." evidence="3">
    <original>K</original>
    <variation>E</variation>
    <location>
        <position position="206"/>
    </location>
</feature>
<feature type="sequence variant" id="VAR_052857" description="In dbSNP:rs8094412.">
    <original>R</original>
    <variation>I</variation>
    <location>
        <position position="229"/>
    </location>
</feature>
<feature type="sequence conflict" description="In Ref. 2; AAH24227." evidence="4" ref="2">
    <original>N</original>
    <variation>D</variation>
    <location>
        <position position="167"/>
    </location>
</feature>
<protein>
    <recommendedName>
        <fullName>Zinc finger protein 519</fullName>
    </recommendedName>
</protein>
<proteinExistence type="evidence at protein level"/>
<accession>Q8TB69</accession>
<name>ZN519_HUMAN</name>
<keyword id="KW-0238">DNA-binding</keyword>
<keyword id="KW-0479">Metal-binding</keyword>
<keyword id="KW-0539">Nucleus</keyword>
<keyword id="KW-1267">Proteomics identification</keyword>
<keyword id="KW-1185">Reference proteome</keyword>
<keyword id="KW-0677">Repeat</keyword>
<keyword id="KW-0804">Transcription</keyword>
<keyword id="KW-0805">Transcription regulation</keyword>
<keyword id="KW-0862">Zinc</keyword>
<keyword id="KW-0863">Zinc-finger</keyword>
<gene>
    <name type="primary">ZNF519</name>
</gene>
<evidence type="ECO:0000255" key="1">
    <source>
        <dbReference type="PROSITE-ProRule" id="PRU00042"/>
    </source>
</evidence>
<evidence type="ECO:0000255" key="2">
    <source>
        <dbReference type="PROSITE-ProRule" id="PRU00119"/>
    </source>
</evidence>
<evidence type="ECO:0000269" key="3">
    <source>
    </source>
</evidence>
<evidence type="ECO:0000305" key="4"/>